<feature type="chain" id="PRO_0000326558" description="Protein TIC 214">
    <location>
        <begin position="1"/>
        <end position="1913"/>
    </location>
</feature>
<feature type="transmembrane region" description="Helical" evidence="2">
    <location>
        <begin position="18"/>
        <end position="38"/>
    </location>
</feature>
<feature type="transmembrane region" description="Helical" evidence="2">
    <location>
        <begin position="64"/>
        <end position="84"/>
    </location>
</feature>
<feature type="transmembrane region" description="Helical" evidence="2">
    <location>
        <begin position="124"/>
        <end position="144"/>
    </location>
</feature>
<feature type="transmembrane region" description="Helical" evidence="2">
    <location>
        <begin position="172"/>
        <end position="192"/>
    </location>
</feature>
<feature type="transmembrane region" description="Helical" evidence="2">
    <location>
        <begin position="214"/>
        <end position="234"/>
    </location>
</feature>
<feature type="region of interest" description="Disordered" evidence="3">
    <location>
        <begin position="245"/>
        <end position="330"/>
    </location>
</feature>
<feature type="region of interest" description="Disordered" evidence="3">
    <location>
        <begin position="707"/>
        <end position="734"/>
    </location>
</feature>
<feature type="region of interest" description="Disordered" evidence="3">
    <location>
        <begin position="1605"/>
        <end position="1652"/>
    </location>
</feature>
<feature type="compositionally biased region" description="Basic and acidic residues" evidence="3">
    <location>
        <begin position="260"/>
        <end position="289"/>
    </location>
</feature>
<feature type="compositionally biased region" description="Acidic residues" evidence="3">
    <location>
        <begin position="303"/>
        <end position="314"/>
    </location>
</feature>
<feature type="compositionally biased region" description="Basic and acidic residues" evidence="3">
    <location>
        <begin position="315"/>
        <end position="330"/>
    </location>
</feature>
<feature type="compositionally biased region" description="Low complexity" evidence="3">
    <location>
        <begin position="718"/>
        <end position="729"/>
    </location>
</feature>
<evidence type="ECO:0000250" key="1">
    <source>
        <dbReference type="UniProtKB" id="P56785"/>
    </source>
</evidence>
<evidence type="ECO:0000255" key="2"/>
<evidence type="ECO:0000256" key="3">
    <source>
        <dbReference type="SAM" id="MobiDB-lite"/>
    </source>
</evidence>
<evidence type="ECO:0000305" key="4"/>
<organism>
    <name type="scientific">Acorus calamus var. americanus</name>
    <name type="common">American sweet flag</name>
    <name type="synonym">Acorus americanus</name>
    <dbReference type="NCBI Taxonomy" id="263995"/>
    <lineage>
        <taxon>Eukaryota</taxon>
        <taxon>Viridiplantae</taxon>
        <taxon>Streptophyta</taxon>
        <taxon>Embryophyta</taxon>
        <taxon>Tracheophyta</taxon>
        <taxon>Spermatophyta</taxon>
        <taxon>Magnoliopsida</taxon>
        <taxon>Liliopsida</taxon>
        <taxon>Acoraceae</taxon>
        <taxon>Acorus</taxon>
    </lineage>
</organism>
<reference key="1">
    <citation type="submission" date="2007-11" db="EMBL/GenBank/DDBJ databases">
        <title>The complete chloroplast genome of Acorus americanus.</title>
        <authorList>
            <person name="Peery R.M."/>
            <person name="Chumley T.W."/>
            <person name="Kuehl J.V."/>
            <person name="Boore J.L."/>
            <person name="Raubeson L.A."/>
        </authorList>
    </citation>
    <scope>NUCLEOTIDE SEQUENCE [LARGE SCALE GENOMIC DNA]</scope>
</reference>
<gene>
    <name evidence="1" type="primary">TIC214</name>
    <name type="synonym">ycf1</name>
</gene>
<sequence>MIFKSFLLGNLGSLYIKIINSVVVVGLYYGFLTTFSIGPSYFFLLRARIMEEGTEREVSATTGFITGQLMMFISIYYAPLHLALGRPHTITVLVIPYLLFHFFSNNQKQFFDYGSTTRNSMRNLSIQCVFLTNLIFQLFNHLMLPSSTLARLVNIYMFRCNNKMLFVTSSFVGWLIGHILFMKWVGLVVSWIRQNHSIRSNVLIRSNKYLGLKLKSAIAQILSIIFFIACVNYLARLPDPSVTKKLNETSKTETEEEESKESQKSKESEEERDVEKETTSETKETKQEQEGSTEQDPSPYWEEKEDPDKIDETEEIRVNGKEKKKDETEEIRVNGKEKKKDEFRFHFKETDYKRSPGYENSYLDGYQDNWDLQSEEEEEEESTLGFEKPLVTCLFDYKRWNRPFRYIKNKTFENAIRDEMSQYFFYTCLNNGKKKISFTYPPSLATFSEIIERKMSLYTTKKLTDDDLYSHWVSNNEEKKNNLSNELINRIKVLDKGSLAPDVLEKRTRLCDDENEQECLPKKYDPLLNGSYRGRIKKLESESTRNDSIISAKGSLEKIWKNKIHSLITNDSREFEHQMDPFDGESLSAYMTHSLTSISKLSLELVSIFHFEDLALLTEQKRIDFENQTKRLKFLFDVITADANNQTIENKFIEIEKIDKKIPRWVYKLISEEDYLAQQEQQEEENEEEAPLDFGIRSRKGRRVVIYTDKNQNRDQDPNPNTDNTTTENDNSDTGEEIALIRYAQQSDFSRDLINGSIRAKRRKIVLWEMLQANAHSPLFLDQVAKMVSFDLFDDLRETMNLIFRNWITKEPELQILDSEEKEDREKLIKIREEDERIIISETWDNVMCAQAIRGCMLVTHSFIRKYIILPLLIIAKNIGRILLFQLSEWDEDFKDWNREMHVKCTYNGVQLSETEFPQNWLKDGIQIKILFPFSLKPWRESKATPSTGGLMKEKKRKNDDFCFLTVWGMEAELPFGPPRNRPSFFKPIFEELDTNIRKVENQSFVFKEKTKDFLKKKTGWVTKIVLLKNKIRNFFTKVNPNLLFGLKKVYEPSENQKDSIISNKITHESTVQIPSSNWTNYSPIEKKMKDLSDRTITTRSQIERITKDKQKGFLTSDINIRSNETSCNAKRTELQKDILRIAKKRSIRFIRKLHSFVKSFIERIYLDIFLCTINIPRINLQLFFESIKKILNKSISNDERNKEKIDETNQNTIHFISTIRNSFSNSNLNNKSKIYWDFSLLSQAYVLYKLSQTQVIKRYQLKSVLQYHRAYPFLKDRIKDLFGTPRIVHAKSRPKKLPISRINAWKNWLRGHYQYNLSQTRWSELVPKKWREKFNQRTIKNKYSRKLNSSEKEKNQQAHYAKEISYVVDSLSSQKGKLKKDYRYDLLSHKYINSNYEDREYSDISRLSLQINGDREIPYDYNRQESDYVLVGLPISDYLGEEYFIGVDKNSDRKYFDRRILRFDLRKDLNIKTQINRDTETNMNKNGTNNYPAIGKKNPFSLPIHQEINSSKKKKQKFFDWMGMREEILYRPISNLEPWFFPEFVLRYDAYKSKPRIISIKSLLLDSQKDERNEIISKTKNINKKNQKKDLSNQKKHLEVENQEKEDFRQVDLRPNPTNQRDPIVSDTRNQQKDIEEDSVGSGVKKRRKKKKFKSKKEAELDFFLKKYLLFQLRWDELLNKKMMTNIKVYCLLLRLKNLKEIAISSIERGEMCLDLMLMQKDLSLRELIKKGIFIIEPIRLSRKWDGKLIMYQTIGISLVAENKDPINIRCRKKGYADENSFNKSVRQQEKMLVDRDENDYDLLVPENILSPRRRRELRILICFNSGNESAVDGNSVFYNNKNVESCRQFLDEDKHLDTDAKKFMKLKFFLWPNYRLEDLACMNRYWFDTTNGSRFSMLRIHMYPRFLISWW</sequence>
<geneLocation type="chloroplast"/>
<accession>A9LYF8</accession>
<keyword id="KW-0150">Chloroplast</keyword>
<keyword id="KW-0472">Membrane</keyword>
<keyword id="KW-0934">Plastid</keyword>
<keyword id="KW-1001">Plastid inner membrane</keyword>
<keyword id="KW-0653">Protein transport</keyword>
<keyword id="KW-0812">Transmembrane</keyword>
<keyword id="KW-1133">Transmembrane helix</keyword>
<keyword id="KW-0813">Transport</keyword>
<proteinExistence type="inferred from homology"/>
<name>TI214_ACOCI</name>
<dbReference type="EMBL" id="EU273602">
    <property type="protein sequence ID" value="ABX38801.1"/>
    <property type="molecule type" value="Genomic_DNA"/>
</dbReference>
<dbReference type="RefSeq" id="YP_001586239.1">
    <property type="nucleotide sequence ID" value="NC_010093.1"/>
</dbReference>
<dbReference type="GeneID" id="5777718"/>
<dbReference type="GO" id="GO:0009706">
    <property type="term" value="C:chloroplast inner membrane"/>
    <property type="evidence" value="ECO:0007669"/>
    <property type="project" value="UniProtKB-SubCell"/>
</dbReference>
<dbReference type="GO" id="GO:0015031">
    <property type="term" value="P:protein transport"/>
    <property type="evidence" value="ECO:0007669"/>
    <property type="project" value="UniProtKB-KW"/>
</dbReference>
<dbReference type="InterPro" id="IPR008896">
    <property type="entry name" value="TIC214"/>
</dbReference>
<dbReference type="PANTHER" id="PTHR33163:SF40">
    <property type="entry name" value="PROTEIN TIC 214"/>
    <property type="match status" value="1"/>
</dbReference>
<dbReference type="PANTHER" id="PTHR33163">
    <property type="entry name" value="PROTEIN TIC 214-RELATED"/>
    <property type="match status" value="1"/>
</dbReference>
<dbReference type="Pfam" id="PF05758">
    <property type="entry name" value="Ycf1"/>
    <property type="match status" value="2"/>
</dbReference>
<protein>
    <recommendedName>
        <fullName evidence="1">Protein TIC 214</fullName>
    </recommendedName>
    <alternativeName>
        <fullName evidence="1">Translocon at the inner envelope membrane of chloroplasts 214</fullName>
        <shortName evidence="1">AtTIC214</shortName>
    </alternativeName>
</protein>
<comment type="function">
    <text evidence="1">Involved in protein precursor import into chloroplasts. May be part of an intermediate translocation complex acting as a protein-conducting channel at the inner envelope.</text>
</comment>
<comment type="subunit">
    <text evidence="1">Part of the Tic complex.</text>
</comment>
<comment type="subcellular location">
    <subcellularLocation>
        <location evidence="1">Plastid</location>
        <location evidence="1">Chloroplast inner membrane</location>
        <topology evidence="2">Multi-pass membrane protein</topology>
    </subcellularLocation>
</comment>
<comment type="similarity">
    <text evidence="4">Belongs to the TIC214 family.</text>
</comment>